<comment type="function">
    <text evidence="1">Catalyzes the condensation of carbamoyl phosphate and aspartate to form carbamoyl aspartate and inorganic phosphate, the committed step in the de novo pyrimidine nucleotide biosynthesis pathway.</text>
</comment>
<comment type="catalytic activity">
    <reaction evidence="1">
        <text>carbamoyl phosphate + L-aspartate = N-carbamoyl-L-aspartate + phosphate + H(+)</text>
        <dbReference type="Rhea" id="RHEA:20013"/>
        <dbReference type="ChEBI" id="CHEBI:15378"/>
        <dbReference type="ChEBI" id="CHEBI:29991"/>
        <dbReference type="ChEBI" id="CHEBI:32814"/>
        <dbReference type="ChEBI" id="CHEBI:43474"/>
        <dbReference type="ChEBI" id="CHEBI:58228"/>
        <dbReference type="EC" id="2.1.3.2"/>
    </reaction>
</comment>
<comment type="pathway">
    <text evidence="1">Pyrimidine metabolism; UMP biosynthesis via de novo pathway; (S)-dihydroorotate from bicarbonate: step 2/3.</text>
</comment>
<comment type="subunit">
    <text evidence="1">Heterododecamer (2C3:3R2) of six catalytic PyrB chains organized as two trimers (C3), and six regulatory PyrI chains organized as three dimers (R2).</text>
</comment>
<comment type="similarity">
    <text evidence="1">Belongs to the aspartate/ornithine carbamoyltransferase superfamily. ATCase family.</text>
</comment>
<proteinExistence type="inferred from homology"/>
<dbReference type="EC" id="2.1.3.2" evidence="1"/>
<dbReference type="EMBL" id="CP000514">
    <property type="protein sequence ID" value="ABM20830.1"/>
    <property type="molecule type" value="Genomic_DNA"/>
</dbReference>
<dbReference type="RefSeq" id="WP_011787164.1">
    <property type="nucleotide sequence ID" value="NC_008740.1"/>
</dbReference>
<dbReference type="SMR" id="A1U761"/>
<dbReference type="STRING" id="351348.Maqu_3761"/>
<dbReference type="KEGG" id="maq:Maqu_3761"/>
<dbReference type="eggNOG" id="COG0540">
    <property type="taxonomic scope" value="Bacteria"/>
</dbReference>
<dbReference type="HOGENOM" id="CLU_043846_2_0_6"/>
<dbReference type="OrthoDB" id="9774690at2"/>
<dbReference type="UniPathway" id="UPA00070">
    <property type="reaction ID" value="UER00116"/>
</dbReference>
<dbReference type="Proteomes" id="UP000000998">
    <property type="component" value="Chromosome"/>
</dbReference>
<dbReference type="GO" id="GO:0005829">
    <property type="term" value="C:cytosol"/>
    <property type="evidence" value="ECO:0007669"/>
    <property type="project" value="TreeGrafter"/>
</dbReference>
<dbReference type="GO" id="GO:0016597">
    <property type="term" value="F:amino acid binding"/>
    <property type="evidence" value="ECO:0007669"/>
    <property type="project" value="InterPro"/>
</dbReference>
<dbReference type="GO" id="GO:0004070">
    <property type="term" value="F:aspartate carbamoyltransferase activity"/>
    <property type="evidence" value="ECO:0007669"/>
    <property type="project" value="UniProtKB-UniRule"/>
</dbReference>
<dbReference type="GO" id="GO:0006207">
    <property type="term" value="P:'de novo' pyrimidine nucleobase biosynthetic process"/>
    <property type="evidence" value="ECO:0007669"/>
    <property type="project" value="InterPro"/>
</dbReference>
<dbReference type="GO" id="GO:0044205">
    <property type="term" value="P:'de novo' UMP biosynthetic process"/>
    <property type="evidence" value="ECO:0007669"/>
    <property type="project" value="UniProtKB-UniRule"/>
</dbReference>
<dbReference type="GO" id="GO:0006520">
    <property type="term" value="P:amino acid metabolic process"/>
    <property type="evidence" value="ECO:0007669"/>
    <property type="project" value="InterPro"/>
</dbReference>
<dbReference type="FunFam" id="3.40.50.1370:FF:000006">
    <property type="entry name" value="Aspartate carbamoyltransferase"/>
    <property type="match status" value="1"/>
</dbReference>
<dbReference type="FunFam" id="3.40.50.1370:FF:000007">
    <property type="entry name" value="Aspartate carbamoyltransferase"/>
    <property type="match status" value="1"/>
</dbReference>
<dbReference type="Gene3D" id="3.40.50.1370">
    <property type="entry name" value="Aspartate/ornithine carbamoyltransferase"/>
    <property type="match status" value="2"/>
</dbReference>
<dbReference type="HAMAP" id="MF_00001">
    <property type="entry name" value="Asp_carb_tr"/>
    <property type="match status" value="1"/>
</dbReference>
<dbReference type="InterPro" id="IPR006132">
    <property type="entry name" value="Asp/Orn_carbamoyltranf_P-bd"/>
</dbReference>
<dbReference type="InterPro" id="IPR006130">
    <property type="entry name" value="Asp/Orn_carbamoylTrfase"/>
</dbReference>
<dbReference type="InterPro" id="IPR036901">
    <property type="entry name" value="Asp/Orn_carbamoylTrfase_sf"/>
</dbReference>
<dbReference type="InterPro" id="IPR002082">
    <property type="entry name" value="Asp_carbamoyltransf"/>
</dbReference>
<dbReference type="InterPro" id="IPR006131">
    <property type="entry name" value="Asp_carbamoyltransf_Asp/Orn-bd"/>
</dbReference>
<dbReference type="NCBIfam" id="TIGR00670">
    <property type="entry name" value="asp_carb_tr"/>
    <property type="match status" value="1"/>
</dbReference>
<dbReference type="NCBIfam" id="NF002032">
    <property type="entry name" value="PRK00856.1"/>
    <property type="match status" value="1"/>
</dbReference>
<dbReference type="PANTHER" id="PTHR45753:SF6">
    <property type="entry name" value="ASPARTATE CARBAMOYLTRANSFERASE"/>
    <property type="match status" value="1"/>
</dbReference>
<dbReference type="PANTHER" id="PTHR45753">
    <property type="entry name" value="ORNITHINE CARBAMOYLTRANSFERASE, MITOCHONDRIAL"/>
    <property type="match status" value="1"/>
</dbReference>
<dbReference type="Pfam" id="PF00185">
    <property type="entry name" value="OTCace"/>
    <property type="match status" value="1"/>
</dbReference>
<dbReference type="Pfam" id="PF02729">
    <property type="entry name" value="OTCace_N"/>
    <property type="match status" value="1"/>
</dbReference>
<dbReference type="PRINTS" id="PR00100">
    <property type="entry name" value="AOTCASE"/>
</dbReference>
<dbReference type="PRINTS" id="PR00101">
    <property type="entry name" value="ATCASE"/>
</dbReference>
<dbReference type="SUPFAM" id="SSF53671">
    <property type="entry name" value="Aspartate/ornithine carbamoyltransferase"/>
    <property type="match status" value="1"/>
</dbReference>
<dbReference type="PROSITE" id="PS00097">
    <property type="entry name" value="CARBAMOYLTRANSFERASE"/>
    <property type="match status" value="1"/>
</dbReference>
<reference key="1">
    <citation type="journal article" date="2011" name="Appl. Environ. Microbiol.">
        <title>Genomic potential of Marinobacter aquaeolei, a biogeochemical 'opportunitroph'.</title>
        <authorList>
            <person name="Singer E."/>
            <person name="Webb E.A."/>
            <person name="Nelson W.C."/>
            <person name="Heidelberg J.F."/>
            <person name="Ivanova N."/>
            <person name="Pati A."/>
            <person name="Edwards K.J."/>
        </authorList>
    </citation>
    <scope>NUCLEOTIDE SEQUENCE [LARGE SCALE GENOMIC DNA]</scope>
    <source>
        <strain>ATCC 700491 / DSM 11845 / VT8</strain>
    </source>
</reference>
<feature type="chain" id="PRO_0000321118" description="Aspartate carbamoyltransferase catalytic subunit">
    <location>
        <begin position="1"/>
        <end position="336"/>
    </location>
</feature>
<feature type="binding site" evidence="1">
    <location>
        <position position="72"/>
    </location>
    <ligand>
        <name>carbamoyl phosphate</name>
        <dbReference type="ChEBI" id="CHEBI:58228"/>
    </ligand>
</feature>
<feature type="binding site" evidence="1">
    <location>
        <position position="73"/>
    </location>
    <ligand>
        <name>carbamoyl phosphate</name>
        <dbReference type="ChEBI" id="CHEBI:58228"/>
    </ligand>
</feature>
<feature type="binding site" evidence="1">
    <location>
        <position position="100"/>
    </location>
    <ligand>
        <name>L-aspartate</name>
        <dbReference type="ChEBI" id="CHEBI:29991"/>
    </ligand>
</feature>
<feature type="binding site" evidence="1">
    <location>
        <position position="122"/>
    </location>
    <ligand>
        <name>carbamoyl phosphate</name>
        <dbReference type="ChEBI" id="CHEBI:58228"/>
    </ligand>
</feature>
<feature type="binding site" evidence="1">
    <location>
        <position position="152"/>
    </location>
    <ligand>
        <name>carbamoyl phosphate</name>
        <dbReference type="ChEBI" id="CHEBI:58228"/>
    </ligand>
</feature>
<feature type="binding site" evidence="1">
    <location>
        <position position="155"/>
    </location>
    <ligand>
        <name>carbamoyl phosphate</name>
        <dbReference type="ChEBI" id="CHEBI:58228"/>
    </ligand>
</feature>
<feature type="binding site" evidence="1">
    <location>
        <position position="185"/>
    </location>
    <ligand>
        <name>L-aspartate</name>
        <dbReference type="ChEBI" id="CHEBI:29991"/>
    </ligand>
</feature>
<feature type="binding site" evidence="1">
    <location>
        <position position="240"/>
    </location>
    <ligand>
        <name>L-aspartate</name>
        <dbReference type="ChEBI" id="CHEBI:29991"/>
    </ligand>
</feature>
<feature type="binding site" evidence="1">
    <location>
        <position position="281"/>
    </location>
    <ligand>
        <name>carbamoyl phosphate</name>
        <dbReference type="ChEBI" id="CHEBI:58228"/>
    </ligand>
</feature>
<feature type="binding site" evidence="1">
    <location>
        <position position="282"/>
    </location>
    <ligand>
        <name>carbamoyl phosphate</name>
        <dbReference type="ChEBI" id="CHEBI:58228"/>
    </ligand>
</feature>
<evidence type="ECO:0000255" key="1">
    <source>
        <dbReference type="HAMAP-Rule" id="MF_00001"/>
    </source>
</evidence>
<name>PYRB_MARN8</name>
<sequence length="336" mass="36782">MTANDPSPNHLQLTRDGQLRHFLTLDGLGQPLLTDILDTADSFIEVGERSIKKVPLLRGRTVVNLFFESSTRTRSTFELAAKRLSADVLNLDISTSATSKGESLSDTLLNLEAMASDMFVVRHSQSGAPHFIAESVTPGVAIINAGDGRHAHPTQAMLDMLTIRQHKGRFEGLKVAIVGDVLHSRVARSQIRALNVLGAEEVRVIAPGTLLPRDVEDLGCTVEYDMARGMKDLDVVIMLRLQKERMEGALLPSEREFYRLYGLNQEKLGLAKPDCIVMHPGPINRGVEIESAVADGPQSVILNQVTNGIAIRMAVMSMAMGGQMAERQQRQQEGRA</sequence>
<organism>
    <name type="scientific">Marinobacter nauticus (strain ATCC 700491 / DSM 11845 / VT8)</name>
    <name type="common">Marinobacter aquaeolei</name>
    <dbReference type="NCBI Taxonomy" id="351348"/>
    <lineage>
        <taxon>Bacteria</taxon>
        <taxon>Pseudomonadati</taxon>
        <taxon>Pseudomonadota</taxon>
        <taxon>Gammaproteobacteria</taxon>
        <taxon>Pseudomonadales</taxon>
        <taxon>Marinobacteraceae</taxon>
        <taxon>Marinobacter</taxon>
    </lineage>
</organism>
<protein>
    <recommendedName>
        <fullName evidence="1">Aspartate carbamoyltransferase catalytic subunit</fullName>
        <ecNumber evidence="1">2.1.3.2</ecNumber>
    </recommendedName>
    <alternativeName>
        <fullName evidence="1">Aspartate transcarbamylase</fullName>
        <shortName evidence="1">ATCase</shortName>
    </alternativeName>
</protein>
<gene>
    <name evidence="1" type="primary">pyrB</name>
    <name type="ordered locus">Maqu_3761</name>
</gene>
<keyword id="KW-0665">Pyrimidine biosynthesis</keyword>
<keyword id="KW-0808">Transferase</keyword>
<accession>A1U761</accession>